<gene>
    <name evidence="1" type="primary">accA</name>
    <name type="ordered locus">HAPS_2088</name>
</gene>
<keyword id="KW-0067">ATP-binding</keyword>
<keyword id="KW-0963">Cytoplasm</keyword>
<keyword id="KW-0275">Fatty acid biosynthesis</keyword>
<keyword id="KW-0276">Fatty acid metabolism</keyword>
<keyword id="KW-0444">Lipid biosynthesis</keyword>
<keyword id="KW-0443">Lipid metabolism</keyword>
<keyword id="KW-0547">Nucleotide-binding</keyword>
<keyword id="KW-1185">Reference proteome</keyword>
<keyword id="KW-0808">Transferase</keyword>
<protein>
    <recommendedName>
        <fullName evidence="1">Acetyl-coenzyme A carboxylase carboxyl transferase subunit alpha</fullName>
        <shortName evidence="1">ACCase subunit alpha</shortName>
        <shortName evidence="1">Acetyl-CoA carboxylase carboxyltransferase subunit alpha</shortName>
        <ecNumber evidence="1">2.1.3.15</ecNumber>
    </recommendedName>
</protein>
<name>ACCA_GLAP5</name>
<evidence type="ECO:0000255" key="1">
    <source>
        <dbReference type="HAMAP-Rule" id="MF_00823"/>
    </source>
</evidence>
<evidence type="ECO:0000255" key="2">
    <source>
        <dbReference type="PROSITE-ProRule" id="PRU01137"/>
    </source>
</evidence>
<reference key="1">
    <citation type="journal article" date="2009" name="J. Bacteriol.">
        <title>Complete genome sequence of Haemophilus parasuis SH0165.</title>
        <authorList>
            <person name="Yue M."/>
            <person name="Yang F."/>
            <person name="Yang J."/>
            <person name="Bei W."/>
            <person name="Cai X."/>
            <person name="Chen L."/>
            <person name="Dong J."/>
            <person name="Zhou R."/>
            <person name="Jin M."/>
            <person name="Jin Q."/>
            <person name="Chen H."/>
        </authorList>
    </citation>
    <scope>NUCLEOTIDE SEQUENCE [LARGE SCALE GENOMIC DNA]</scope>
    <source>
        <strain>SH0165</strain>
    </source>
</reference>
<proteinExistence type="inferred from homology"/>
<comment type="function">
    <text evidence="1">Component of the acetyl coenzyme A carboxylase (ACC) complex. First, biotin carboxylase catalyzes the carboxylation of biotin on its carrier protein (BCCP) and then the CO(2) group is transferred by the carboxyltransferase to acetyl-CoA to form malonyl-CoA.</text>
</comment>
<comment type="catalytic activity">
    <reaction evidence="1">
        <text>N(6)-carboxybiotinyl-L-lysyl-[protein] + acetyl-CoA = N(6)-biotinyl-L-lysyl-[protein] + malonyl-CoA</text>
        <dbReference type="Rhea" id="RHEA:54728"/>
        <dbReference type="Rhea" id="RHEA-COMP:10505"/>
        <dbReference type="Rhea" id="RHEA-COMP:10506"/>
        <dbReference type="ChEBI" id="CHEBI:57288"/>
        <dbReference type="ChEBI" id="CHEBI:57384"/>
        <dbReference type="ChEBI" id="CHEBI:83144"/>
        <dbReference type="ChEBI" id="CHEBI:83145"/>
        <dbReference type="EC" id="2.1.3.15"/>
    </reaction>
</comment>
<comment type="pathway">
    <text evidence="1">Lipid metabolism; malonyl-CoA biosynthesis; malonyl-CoA from acetyl-CoA: step 1/1.</text>
</comment>
<comment type="subunit">
    <text evidence="1">Acetyl-CoA carboxylase is a heterohexamer composed of biotin carboxyl carrier protein (AccB), biotin carboxylase (AccC) and two subunits each of ACCase subunit alpha (AccA) and ACCase subunit beta (AccD).</text>
</comment>
<comment type="subcellular location">
    <subcellularLocation>
        <location evidence="1">Cytoplasm</location>
    </subcellularLocation>
</comment>
<comment type="similarity">
    <text evidence="1">Belongs to the AccA family.</text>
</comment>
<dbReference type="EC" id="2.1.3.15" evidence="1"/>
<dbReference type="EMBL" id="CP001321">
    <property type="protein sequence ID" value="ACL33544.1"/>
    <property type="molecule type" value="Genomic_DNA"/>
</dbReference>
<dbReference type="RefSeq" id="WP_005711455.1">
    <property type="nucleotide sequence ID" value="NC_011852.1"/>
</dbReference>
<dbReference type="SMR" id="B8F892"/>
<dbReference type="STRING" id="557723.HAPS_2088"/>
<dbReference type="GeneID" id="66619532"/>
<dbReference type="KEGG" id="hap:HAPS_2088"/>
<dbReference type="HOGENOM" id="CLU_015486_0_2_6"/>
<dbReference type="UniPathway" id="UPA00655">
    <property type="reaction ID" value="UER00711"/>
</dbReference>
<dbReference type="Proteomes" id="UP000006743">
    <property type="component" value="Chromosome"/>
</dbReference>
<dbReference type="GO" id="GO:0009317">
    <property type="term" value="C:acetyl-CoA carboxylase complex"/>
    <property type="evidence" value="ECO:0007669"/>
    <property type="project" value="InterPro"/>
</dbReference>
<dbReference type="GO" id="GO:0003989">
    <property type="term" value="F:acetyl-CoA carboxylase activity"/>
    <property type="evidence" value="ECO:0007669"/>
    <property type="project" value="InterPro"/>
</dbReference>
<dbReference type="GO" id="GO:0005524">
    <property type="term" value="F:ATP binding"/>
    <property type="evidence" value="ECO:0007669"/>
    <property type="project" value="UniProtKB-KW"/>
</dbReference>
<dbReference type="GO" id="GO:0016743">
    <property type="term" value="F:carboxyl- or carbamoyltransferase activity"/>
    <property type="evidence" value="ECO:0007669"/>
    <property type="project" value="UniProtKB-UniRule"/>
</dbReference>
<dbReference type="GO" id="GO:0006633">
    <property type="term" value="P:fatty acid biosynthetic process"/>
    <property type="evidence" value="ECO:0007669"/>
    <property type="project" value="UniProtKB-KW"/>
</dbReference>
<dbReference type="GO" id="GO:2001295">
    <property type="term" value="P:malonyl-CoA biosynthetic process"/>
    <property type="evidence" value="ECO:0007669"/>
    <property type="project" value="UniProtKB-UniRule"/>
</dbReference>
<dbReference type="FunFam" id="3.90.226.10:FF:000008">
    <property type="entry name" value="Acetyl-coenzyme A carboxylase carboxyl transferase subunit alpha"/>
    <property type="match status" value="1"/>
</dbReference>
<dbReference type="Gene3D" id="3.90.226.10">
    <property type="entry name" value="2-enoyl-CoA Hydratase, Chain A, domain 1"/>
    <property type="match status" value="1"/>
</dbReference>
<dbReference type="HAMAP" id="MF_00823">
    <property type="entry name" value="AcetylCoA_CT_alpha"/>
    <property type="match status" value="1"/>
</dbReference>
<dbReference type="InterPro" id="IPR001095">
    <property type="entry name" value="Acetyl_CoA_COase_a_su"/>
</dbReference>
<dbReference type="InterPro" id="IPR029045">
    <property type="entry name" value="ClpP/crotonase-like_dom_sf"/>
</dbReference>
<dbReference type="InterPro" id="IPR011763">
    <property type="entry name" value="COA_CT_C"/>
</dbReference>
<dbReference type="NCBIfam" id="TIGR00513">
    <property type="entry name" value="accA"/>
    <property type="match status" value="1"/>
</dbReference>
<dbReference type="NCBIfam" id="NF041504">
    <property type="entry name" value="AccA_sub"/>
    <property type="match status" value="1"/>
</dbReference>
<dbReference type="NCBIfam" id="NF004344">
    <property type="entry name" value="PRK05724.1"/>
    <property type="match status" value="1"/>
</dbReference>
<dbReference type="PANTHER" id="PTHR42853">
    <property type="entry name" value="ACETYL-COENZYME A CARBOXYLASE CARBOXYL TRANSFERASE SUBUNIT ALPHA"/>
    <property type="match status" value="1"/>
</dbReference>
<dbReference type="PANTHER" id="PTHR42853:SF3">
    <property type="entry name" value="ACETYL-COENZYME A CARBOXYLASE CARBOXYL TRANSFERASE SUBUNIT ALPHA, CHLOROPLASTIC"/>
    <property type="match status" value="1"/>
</dbReference>
<dbReference type="Pfam" id="PF03255">
    <property type="entry name" value="ACCA"/>
    <property type="match status" value="1"/>
</dbReference>
<dbReference type="PRINTS" id="PR01069">
    <property type="entry name" value="ACCCTRFRASEA"/>
</dbReference>
<dbReference type="SUPFAM" id="SSF52096">
    <property type="entry name" value="ClpP/crotonase"/>
    <property type="match status" value="1"/>
</dbReference>
<dbReference type="PROSITE" id="PS50989">
    <property type="entry name" value="COA_CT_CTER"/>
    <property type="match status" value="1"/>
</dbReference>
<accession>B8F892</accession>
<sequence length="317" mass="35153">MTTEYLDFELPIAELEAKIEALRSAVGNDNKINLDDEIARLQKKSEELTKKTFSDLDAWQISRMARHPSRPYTLDYIERIFTEFDELAGDRAFADDKAIVGGIARLDGRPVMVIGHQKGRTVKEKVKRNFGMPAPEGYRKALRLMQMAERFNMPIITFIDTPGAYPGIGAEERGQSEAIARNLREMSTLKVPVICTVIGEGGSGGALAIGVGDKVNMLQYSTYSVISPEGCASILWKSAEKASTAAEVMGLTAPRLKELELIDNIVPEPLGGAHRNFDEMAANLKQRLLEDLADLDPLNAEALLDRRYQRLMGYGYV</sequence>
<feature type="chain" id="PRO_1000148743" description="Acetyl-coenzyme A carboxylase carboxyl transferase subunit alpha">
    <location>
        <begin position="1"/>
        <end position="317"/>
    </location>
</feature>
<feature type="domain" description="CoA carboxyltransferase C-terminal" evidence="2">
    <location>
        <begin position="33"/>
        <end position="294"/>
    </location>
</feature>
<organism>
    <name type="scientific">Glaesserella parasuis serovar 5 (strain SH0165)</name>
    <name type="common">Haemophilus parasuis</name>
    <dbReference type="NCBI Taxonomy" id="557723"/>
    <lineage>
        <taxon>Bacteria</taxon>
        <taxon>Pseudomonadati</taxon>
        <taxon>Pseudomonadota</taxon>
        <taxon>Gammaproteobacteria</taxon>
        <taxon>Pasteurellales</taxon>
        <taxon>Pasteurellaceae</taxon>
        <taxon>Glaesserella</taxon>
    </lineage>
</organism>